<accession>A0A7H0DN93</accession>
<reference key="1">
    <citation type="journal article" date="2022" name="J. Infect. Dis.">
        <title>Exportation of Monkeypox virus from the African continent.</title>
        <authorList>
            <person name="Mauldin M.R."/>
            <person name="McCollum A.M."/>
            <person name="Nakazawa Y.J."/>
            <person name="Mandra A."/>
            <person name="Whitehouse E.R."/>
            <person name="Davidson W."/>
            <person name="Zhao H."/>
            <person name="Gao J."/>
            <person name="Li Y."/>
            <person name="Doty J."/>
            <person name="Yinka-Ogunleye A."/>
            <person name="Akinpelu A."/>
            <person name="Aruna O."/>
            <person name="Naidoo D."/>
            <person name="Lewandowski K."/>
            <person name="Afrough B."/>
            <person name="Graham V."/>
            <person name="Aarons E."/>
            <person name="Hewson R."/>
            <person name="Vipond R."/>
            <person name="Dunning J."/>
            <person name="Chand M."/>
            <person name="Brown C."/>
            <person name="Cohen-Gihon I."/>
            <person name="Erez N."/>
            <person name="Shifman O."/>
            <person name="Israeli O."/>
            <person name="Sharon M."/>
            <person name="Schwartz E."/>
            <person name="Beth-Din A."/>
            <person name="Zvi A."/>
            <person name="Mak T.M."/>
            <person name="Ng Y.K."/>
            <person name="Cui L."/>
            <person name="Lin R.T.P."/>
            <person name="Olson V.A."/>
            <person name="Brooks T."/>
            <person name="Paran N."/>
            <person name="Ihekweazu C."/>
            <person name="Reynolds M.G."/>
        </authorList>
    </citation>
    <scope>NUCLEOTIDE SEQUENCE [LARGE SCALE GENOMIC DNA]</scope>
    <source>
        <strain>MPXV-M5312_HM12_Rivers</strain>
    </source>
</reference>
<evidence type="ECO:0000250" key="1">
    <source>
        <dbReference type="UniProtKB" id="P04311"/>
    </source>
</evidence>
<evidence type="ECO:0000250" key="2">
    <source>
        <dbReference type="UniProtKB" id="P68319"/>
    </source>
</evidence>
<evidence type="ECO:0000255" key="3">
    <source>
        <dbReference type="PROSITE-ProRule" id="PRU00794"/>
    </source>
</evidence>
<evidence type="ECO:0000305" key="4"/>
<sequence length="213" mass="24936">MGFTMDEEVIFETPRELISIKRIKDIPRSKDTHVFAACITSDGYPLIGARRTSFAFQAILSQQNSDSIFRVSTKLLRFMYYNELREIFRRLRKGSINNIDPHFEELILLGGKLDKKESIKDCLRRELKEESDEHITVKEFGNVILKLTTSDKLFNKVYIGYCMACFINQSLEDLSHTSIYNVEIRKIKSLNDCINDDKYEYLSYIYNILINSK</sequence>
<protein>
    <recommendedName>
        <fullName>mRNA-decapping protein OPG121</fullName>
    </recommendedName>
</protein>
<organismHost>
    <name type="scientific">Cynomys gunnisoni</name>
    <name type="common">Gunnison's prairie dog</name>
    <name type="synonym">Spermophilus gunnisoni</name>
    <dbReference type="NCBI Taxonomy" id="45479"/>
</organismHost>
<organismHost>
    <name type="scientific">Cynomys leucurus</name>
    <name type="common">White-tailed prairie dog</name>
    <dbReference type="NCBI Taxonomy" id="99825"/>
</organismHost>
<organismHost>
    <name type="scientific">Cynomys ludovicianus</name>
    <name type="common">Black-tailed prairie dog</name>
    <dbReference type="NCBI Taxonomy" id="45480"/>
</organismHost>
<organismHost>
    <name type="scientific">Cynomys mexicanus</name>
    <name type="common">Mexican prairie dog</name>
    <dbReference type="NCBI Taxonomy" id="99826"/>
</organismHost>
<organismHost>
    <name type="scientific">Cynomys parvidens</name>
    <name type="common">Utah prairie dog</name>
    <dbReference type="NCBI Taxonomy" id="99827"/>
</organismHost>
<organismHost>
    <name type="scientific">Gliridae</name>
    <name type="common">dormice</name>
    <dbReference type="NCBI Taxonomy" id="30650"/>
</organismHost>
<organismHost>
    <name type="scientific">Heliosciurus ruwenzorii</name>
    <name type="common">Ruwenzori sun squirrel</name>
    <dbReference type="NCBI Taxonomy" id="226685"/>
</organismHost>
<organismHost>
    <name type="scientific">Homo sapiens</name>
    <name type="common">Human</name>
    <dbReference type="NCBI Taxonomy" id="9606"/>
</organismHost>
<organismHost>
    <name type="scientific">Mus musculus</name>
    <name type="common">Mouse</name>
    <dbReference type="NCBI Taxonomy" id="10090"/>
</organismHost>
<comment type="function">
    <text evidence="2">Acts with RNA polymerase to initiate transcription from late gene promoters.</text>
</comment>
<comment type="catalytic activity">
    <reaction evidence="1">
        <text>a 5'-end (N(7)-methyl 5'-triphosphoguanosine)-guanosine in mRNA + H2O = a 5'-end phospho-guanosine in mRNA + N(7)-methyl-GDP + 2 H(+)</text>
        <dbReference type="Rhea" id="RHEA:60872"/>
        <dbReference type="Rhea" id="RHEA-COMP:15683"/>
        <dbReference type="Rhea" id="RHEA-COMP:15687"/>
        <dbReference type="ChEBI" id="CHEBI:15377"/>
        <dbReference type="ChEBI" id="CHEBI:15378"/>
        <dbReference type="ChEBI" id="CHEBI:63714"/>
        <dbReference type="ChEBI" id="CHEBI:143975"/>
        <dbReference type="ChEBI" id="CHEBI:143979"/>
    </reaction>
</comment>
<comment type="cofactor">
    <cofactor evidence="1">
        <name>Mg(2+)</name>
        <dbReference type="ChEBI" id="CHEBI:18420"/>
    </cofactor>
    <cofactor evidence="1">
        <name>Mn(2+)</name>
        <dbReference type="ChEBI" id="CHEBI:29035"/>
    </cofactor>
</comment>
<comment type="subunit">
    <text evidence="2">Interacts with the late transcription elongation factor VLTF-4/OPG110. Interacts with the late transcription factors VLTF-1.</text>
</comment>
<comment type="similarity">
    <text evidence="4">Belongs to the Nudix hydrolase family.</text>
</comment>
<proteinExistence type="inferred from homology"/>
<name>PG121_MONPV</name>
<dbReference type="EMBL" id="KC257461">
    <property type="protein sequence ID" value="AGF37010.1"/>
    <property type="molecule type" value="Genomic_DNA"/>
</dbReference>
<dbReference type="EMBL" id="MT903340">
    <property type="protein sequence ID" value="QNP12976.1"/>
    <property type="molecule type" value="Genomic_DNA"/>
</dbReference>
<dbReference type="RefSeq" id="NP_536533.1">
    <property type="nucleotide sequence ID" value="NC_003310.1"/>
</dbReference>
<dbReference type="RefSeq" id="YP_010377103.1">
    <property type="nucleotide sequence ID" value="NC_063383.1"/>
</dbReference>
<dbReference type="SMR" id="A0A7H0DN93"/>
<dbReference type="GeneID" id="72551516"/>
<dbReference type="GeneID" id="929063"/>
<dbReference type="KEGG" id="vg:929063"/>
<dbReference type="Proteomes" id="UP000516359">
    <property type="component" value="Genome"/>
</dbReference>
<dbReference type="GO" id="GO:0016787">
    <property type="term" value="F:hydrolase activity"/>
    <property type="evidence" value="ECO:0007669"/>
    <property type="project" value="UniProtKB-KW"/>
</dbReference>
<dbReference type="GO" id="GO:0046872">
    <property type="term" value="F:metal ion binding"/>
    <property type="evidence" value="ECO:0007669"/>
    <property type="project" value="UniProtKB-KW"/>
</dbReference>
<dbReference type="Gene3D" id="3.90.79.10">
    <property type="entry name" value="Nucleoside Triphosphate Pyrophosphohydrolase"/>
    <property type="match status" value="1"/>
</dbReference>
<dbReference type="InterPro" id="IPR015797">
    <property type="entry name" value="NUDIX_hydrolase-like_dom_sf"/>
</dbReference>
<dbReference type="InterPro" id="IPR000086">
    <property type="entry name" value="NUDIX_hydrolase_dom"/>
</dbReference>
<dbReference type="InterPro" id="IPR003300">
    <property type="entry name" value="Viral_VD9"/>
</dbReference>
<dbReference type="Pfam" id="PF00293">
    <property type="entry name" value="NUDIX"/>
    <property type="match status" value="1"/>
</dbReference>
<dbReference type="PRINTS" id="PR01363">
    <property type="entry name" value="VD09PROTEIN"/>
</dbReference>
<dbReference type="SUPFAM" id="SSF55811">
    <property type="entry name" value="Nudix"/>
    <property type="match status" value="1"/>
</dbReference>
<dbReference type="PROSITE" id="PS51462">
    <property type="entry name" value="NUDIX"/>
    <property type="match status" value="1"/>
</dbReference>
<dbReference type="PROSITE" id="PS00893">
    <property type="entry name" value="NUDIX_BOX"/>
    <property type="match status" value="1"/>
</dbReference>
<feature type="chain" id="PRO_0000457575" description="mRNA-decapping protein OPG121">
    <location>
        <begin position="1"/>
        <end position="213"/>
    </location>
</feature>
<feature type="domain" description="Nudix hydrolase" evidence="3">
    <location>
        <begin position="30"/>
        <end position="209"/>
    </location>
</feature>
<feature type="short sequence motif" description="Nudix box" evidence="3">
    <location>
        <begin position="111"/>
        <end position="132"/>
    </location>
</feature>
<feature type="binding site" evidence="1">
    <location>
        <position position="16"/>
    </location>
    <ligand>
        <name>N(7)-methyl-GTP</name>
        <dbReference type="ChEBI" id="CHEBI:87133"/>
    </ligand>
</feature>
<feature type="binding site" evidence="1">
    <location>
        <position position="50"/>
    </location>
    <ligand>
        <name>N(7)-methyl-GTP</name>
        <dbReference type="ChEBI" id="CHEBI:87133"/>
    </ligand>
</feature>
<feature type="binding site" evidence="1">
    <location>
        <position position="126"/>
    </location>
    <ligand>
        <name>Mg(2+)</name>
        <dbReference type="ChEBI" id="CHEBI:18420"/>
    </ligand>
</feature>
<feature type="binding site" evidence="1">
    <location>
        <position position="130"/>
    </location>
    <ligand>
        <name>Mg(2+)</name>
        <dbReference type="ChEBI" id="CHEBI:18420"/>
    </ligand>
</feature>
<feature type="binding site" evidence="1">
    <location>
        <position position="151"/>
    </location>
    <ligand>
        <name>N(7)-methyl-GTP</name>
        <dbReference type="ChEBI" id="CHEBI:87133"/>
    </ligand>
</feature>
<feature type="binding site" evidence="1">
    <location>
        <position position="183"/>
    </location>
    <ligand>
        <name>Mg(2+)</name>
        <dbReference type="ChEBI" id="CHEBI:18420"/>
    </ligand>
</feature>
<organism>
    <name type="scientific">Monkeypox virus</name>
    <dbReference type="NCBI Taxonomy" id="10244"/>
    <lineage>
        <taxon>Viruses</taxon>
        <taxon>Varidnaviria</taxon>
        <taxon>Bamfordvirae</taxon>
        <taxon>Nucleocytoviricota</taxon>
        <taxon>Pokkesviricetes</taxon>
        <taxon>Chitovirales</taxon>
        <taxon>Poxviridae</taxon>
        <taxon>Chordopoxvirinae</taxon>
        <taxon>Orthopoxvirus</taxon>
    </lineage>
</organism>
<gene>
    <name type="primary">OPG121</name>
    <name type="ORF">MPXVgp106</name>
</gene>
<keyword id="KW-0378">Hydrolase</keyword>
<keyword id="KW-0460">Magnesium</keyword>
<keyword id="KW-0464">Manganese</keyword>
<keyword id="KW-0479">Metal-binding</keyword>
<keyword id="KW-1185">Reference proteome</keyword>